<feature type="chain" id="PRO_0000079573" description="Protein FAM118A">
    <location>
        <begin position="1"/>
        <end position="357"/>
    </location>
</feature>
<feature type="transmembrane region" description="Helical" evidence="2">
    <location>
        <begin position="30"/>
        <end position="46"/>
    </location>
</feature>
<feature type="modified residue" description="N-acetylmethionine" evidence="1">
    <location>
        <position position="1"/>
    </location>
</feature>
<feature type="modified residue" description="Phosphoserine" evidence="1">
    <location>
        <position position="311"/>
    </location>
</feature>
<feature type="splice variant" id="VSP_014460" description="In isoform 2." evidence="3">
    <original>EVLQNLYRTKSFLFVGCGETLRDQIFQALFLYS</original>
    <variation>VSLFSLGSGCLFWGTNGGSQPSGCVSQAFWFSG</variation>
    <location>
        <begin position="218"/>
        <end position="250"/>
    </location>
</feature>
<feature type="splice variant" id="VSP_014461" description="In isoform 2." evidence="3">
    <location>
        <begin position="251"/>
        <end position="357"/>
    </location>
</feature>
<feature type="sequence conflict" description="In Ref. 1; BAC38423." evidence="4" ref="1">
    <original>S</original>
    <variation>R</variation>
    <location>
        <position position="54"/>
    </location>
</feature>
<organism>
    <name type="scientific">Mus musculus</name>
    <name type="common">Mouse</name>
    <dbReference type="NCBI Taxonomy" id="10090"/>
    <lineage>
        <taxon>Eukaryota</taxon>
        <taxon>Metazoa</taxon>
        <taxon>Chordata</taxon>
        <taxon>Craniata</taxon>
        <taxon>Vertebrata</taxon>
        <taxon>Euteleostomi</taxon>
        <taxon>Mammalia</taxon>
        <taxon>Eutheria</taxon>
        <taxon>Euarchontoglires</taxon>
        <taxon>Glires</taxon>
        <taxon>Rodentia</taxon>
        <taxon>Myomorpha</taxon>
        <taxon>Muroidea</taxon>
        <taxon>Muridae</taxon>
        <taxon>Murinae</taxon>
        <taxon>Mus</taxon>
        <taxon>Mus</taxon>
    </lineage>
</organism>
<proteinExistence type="evidence at protein level"/>
<sequence length="357" mass="40475">MESVEKTTNRSEQKCRKFLKSLIRKQPQDLLLVIGTGVSAAVAPGIRALCSWRSCIEAVIEAAEQLEVLHPGDVAEFRRKVMKDRDLLVVAHDLIRKMSPRTGDTKPNFFQDCLMEVFDSLEQHIQNPVVLRSILSLMDRGTMVLTTNYDNLLEIFGQQQSKPMESLDLKDKTKVLQWARGHIKYGVLHIHGLYTDPCGMVLDPSGYKDVTQDPEVMEVLQNLYRTKSFLFVGCGETLRDQIFQALFLYSVPNKVDLEHYMVVLKENEDHFFKHQADMLLHGIKVVSYGDCFDLFPGYVQDLATQICKQRSPDAERVDSTTLLGNACQDCAKRKLEENGIEVTKKVRQSDTDDAGGS</sequence>
<comment type="subcellular location">
    <subcellularLocation>
        <location evidence="4">Membrane</location>
        <topology evidence="4">Single-pass membrane protein</topology>
    </subcellularLocation>
</comment>
<comment type="alternative products">
    <event type="alternative splicing"/>
    <isoform>
        <id>Q91YN1-1</id>
        <name>1</name>
        <sequence type="displayed"/>
    </isoform>
    <isoform>
        <id>Q91YN1-2</id>
        <name>2</name>
        <sequence type="described" ref="VSP_014460 VSP_014461"/>
    </isoform>
</comment>
<comment type="similarity">
    <text evidence="4">Belongs to the FAM118 family.</text>
</comment>
<evidence type="ECO:0000250" key="1">
    <source>
        <dbReference type="UniProtKB" id="Q9NWS6"/>
    </source>
</evidence>
<evidence type="ECO:0000255" key="2"/>
<evidence type="ECO:0000303" key="3">
    <source>
    </source>
</evidence>
<evidence type="ECO:0000305" key="4"/>
<reference key="1">
    <citation type="journal article" date="2005" name="Science">
        <title>The transcriptional landscape of the mammalian genome.</title>
        <authorList>
            <person name="Carninci P."/>
            <person name="Kasukawa T."/>
            <person name="Katayama S."/>
            <person name="Gough J."/>
            <person name="Frith M.C."/>
            <person name="Maeda N."/>
            <person name="Oyama R."/>
            <person name="Ravasi T."/>
            <person name="Lenhard B."/>
            <person name="Wells C."/>
            <person name="Kodzius R."/>
            <person name="Shimokawa K."/>
            <person name="Bajic V.B."/>
            <person name="Brenner S.E."/>
            <person name="Batalov S."/>
            <person name="Forrest A.R."/>
            <person name="Zavolan M."/>
            <person name="Davis M.J."/>
            <person name="Wilming L.G."/>
            <person name="Aidinis V."/>
            <person name="Allen J.E."/>
            <person name="Ambesi-Impiombato A."/>
            <person name="Apweiler R."/>
            <person name="Aturaliya R.N."/>
            <person name="Bailey T.L."/>
            <person name="Bansal M."/>
            <person name="Baxter L."/>
            <person name="Beisel K.W."/>
            <person name="Bersano T."/>
            <person name="Bono H."/>
            <person name="Chalk A.M."/>
            <person name="Chiu K.P."/>
            <person name="Choudhary V."/>
            <person name="Christoffels A."/>
            <person name="Clutterbuck D.R."/>
            <person name="Crowe M.L."/>
            <person name="Dalla E."/>
            <person name="Dalrymple B.P."/>
            <person name="de Bono B."/>
            <person name="Della Gatta G."/>
            <person name="di Bernardo D."/>
            <person name="Down T."/>
            <person name="Engstrom P."/>
            <person name="Fagiolini M."/>
            <person name="Faulkner G."/>
            <person name="Fletcher C.F."/>
            <person name="Fukushima T."/>
            <person name="Furuno M."/>
            <person name="Futaki S."/>
            <person name="Gariboldi M."/>
            <person name="Georgii-Hemming P."/>
            <person name="Gingeras T.R."/>
            <person name="Gojobori T."/>
            <person name="Green R.E."/>
            <person name="Gustincich S."/>
            <person name="Harbers M."/>
            <person name="Hayashi Y."/>
            <person name="Hensch T.K."/>
            <person name="Hirokawa N."/>
            <person name="Hill D."/>
            <person name="Huminiecki L."/>
            <person name="Iacono M."/>
            <person name="Ikeo K."/>
            <person name="Iwama A."/>
            <person name="Ishikawa T."/>
            <person name="Jakt M."/>
            <person name="Kanapin A."/>
            <person name="Katoh M."/>
            <person name="Kawasawa Y."/>
            <person name="Kelso J."/>
            <person name="Kitamura H."/>
            <person name="Kitano H."/>
            <person name="Kollias G."/>
            <person name="Krishnan S.P."/>
            <person name="Kruger A."/>
            <person name="Kummerfeld S.K."/>
            <person name="Kurochkin I.V."/>
            <person name="Lareau L.F."/>
            <person name="Lazarevic D."/>
            <person name="Lipovich L."/>
            <person name="Liu J."/>
            <person name="Liuni S."/>
            <person name="McWilliam S."/>
            <person name="Madan Babu M."/>
            <person name="Madera M."/>
            <person name="Marchionni L."/>
            <person name="Matsuda H."/>
            <person name="Matsuzawa S."/>
            <person name="Miki H."/>
            <person name="Mignone F."/>
            <person name="Miyake S."/>
            <person name="Morris K."/>
            <person name="Mottagui-Tabar S."/>
            <person name="Mulder N."/>
            <person name="Nakano N."/>
            <person name="Nakauchi H."/>
            <person name="Ng P."/>
            <person name="Nilsson R."/>
            <person name="Nishiguchi S."/>
            <person name="Nishikawa S."/>
            <person name="Nori F."/>
            <person name="Ohara O."/>
            <person name="Okazaki Y."/>
            <person name="Orlando V."/>
            <person name="Pang K.C."/>
            <person name="Pavan W.J."/>
            <person name="Pavesi G."/>
            <person name="Pesole G."/>
            <person name="Petrovsky N."/>
            <person name="Piazza S."/>
            <person name="Reed J."/>
            <person name="Reid J.F."/>
            <person name="Ring B.Z."/>
            <person name="Ringwald M."/>
            <person name="Rost B."/>
            <person name="Ruan Y."/>
            <person name="Salzberg S.L."/>
            <person name="Sandelin A."/>
            <person name="Schneider C."/>
            <person name="Schoenbach C."/>
            <person name="Sekiguchi K."/>
            <person name="Semple C.A."/>
            <person name="Seno S."/>
            <person name="Sessa L."/>
            <person name="Sheng Y."/>
            <person name="Shibata Y."/>
            <person name="Shimada H."/>
            <person name="Shimada K."/>
            <person name="Silva D."/>
            <person name="Sinclair B."/>
            <person name="Sperling S."/>
            <person name="Stupka E."/>
            <person name="Sugiura K."/>
            <person name="Sultana R."/>
            <person name="Takenaka Y."/>
            <person name="Taki K."/>
            <person name="Tammoja K."/>
            <person name="Tan S.L."/>
            <person name="Tang S."/>
            <person name="Taylor M.S."/>
            <person name="Tegner J."/>
            <person name="Teichmann S.A."/>
            <person name="Ueda H.R."/>
            <person name="van Nimwegen E."/>
            <person name="Verardo R."/>
            <person name="Wei C.L."/>
            <person name="Yagi K."/>
            <person name="Yamanishi H."/>
            <person name="Zabarovsky E."/>
            <person name="Zhu S."/>
            <person name="Zimmer A."/>
            <person name="Hide W."/>
            <person name="Bult C."/>
            <person name="Grimmond S.M."/>
            <person name="Teasdale R.D."/>
            <person name="Liu E.T."/>
            <person name="Brusic V."/>
            <person name="Quackenbush J."/>
            <person name="Wahlestedt C."/>
            <person name="Mattick J.S."/>
            <person name="Hume D.A."/>
            <person name="Kai C."/>
            <person name="Sasaki D."/>
            <person name="Tomaru Y."/>
            <person name="Fukuda S."/>
            <person name="Kanamori-Katayama M."/>
            <person name="Suzuki M."/>
            <person name="Aoki J."/>
            <person name="Arakawa T."/>
            <person name="Iida J."/>
            <person name="Imamura K."/>
            <person name="Itoh M."/>
            <person name="Kato T."/>
            <person name="Kawaji H."/>
            <person name="Kawagashira N."/>
            <person name="Kawashima T."/>
            <person name="Kojima M."/>
            <person name="Kondo S."/>
            <person name="Konno H."/>
            <person name="Nakano K."/>
            <person name="Ninomiya N."/>
            <person name="Nishio T."/>
            <person name="Okada M."/>
            <person name="Plessy C."/>
            <person name="Shibata K."/>
            <person name="Shiraki T."/>
            <person name="Suzuki S."/>
            <person name="Tagami M."/>
            <person name="Waki K."/>
            <person name="Watahiki A."/>
            <person name="Okamura-Oho Y."/>
            <person name="Suzuki H."/>
            <person name="Kawai J."/>
            <person name="Hayashizaki Y."/>
        </authorList>
    </citation>
    <scope>NUCLEOTIDE SEQUENCE [LARGE SCALE MRNA] (ISOFORMS 1 AND 2)</scope>
    <source>
        <strain>C57BL/6J</strain>
        <tissue>Cerebellum</tissue>
        <tissue>Lung</tissue>
        <tissue>Spleen</tissue>
    </source>
</reference>
<reference key="2">
    <citation type="journal article" date="2004" name="Genome Res.">
        <title>The status, quality, and expansion of the NIH full-length cDNA project: the Mammalian Gene Collection (MGC).</title>
        <authorList>
            <consortium name="The MGC Project Team"/>
        </authorList>
    </citation>
    <scope>NUCLEOTIDE SEQUENCE [LARGE SCALE MRNA] (ISOFORM 1)</scope>
    <source>
        <strain>C57BL/6J</strain>
        <strain>FVB/N</strain>
        <strain>FVB/N-3</strain>
        <tissue>Embryonic germ cell</tissue>
        <tissue>Mammary tumor</tissue>
    </source>
</reference>
<reference key="3">
    <citation type="journal article" date="2010" name="Cell">
        <title>A tissue-specific atlas of mouse protein phosphorylation and expression.</title>
        <authorList>
            <person name="Huttlin E.L."/>
            <person name="Jedrychowski M.P."/>
            <person name="Elias J.E."/>
            <person name="Goswami T."/>
            <person name="Rad R."/>
            <person name="Beausoleil S.A."/>
            <person name="Villen J."/>
            <person name="Haas W."/>
            <person name="Sowa M.E."/>
            <person name="Gygi S.P."/>
        </authorList>
    </citation>
    <scope>IDENTIFICATION BY MASS SPECTROMETRY [LARGE SCALE ANALYSIS]</scope>
    <source>
        <tissue>Testis</tissue>
    </source>
</reference>
<dbReference type="EMBL" id="AK078807">
    <property type="protein sequence ID" value="BAC37403.1"/>
    <property type="molecule type" value="mRNA"/>
</dbReference>
<dbReference type="EMBL" id="AK082151">
    <property type="protein sequence ID" value="BAC38423.1"/>
    <property type="molecule type" value="mRNA"/>
</dbReference>
<dbReference type="EMBL" id="AK143690">
    <property type="protein sequence ID" value="BAE25500.1"/>
    <property type="molecule type" value="mRNA"/>
</dbReference>
<dbReference type="EMBL" id="BC016425">
    <property type="protein sequence ID" value="AAH16425.1"/>
    <property type="molecule type" value="mRNA"/>
</dbReference>
<dbReference type="EMBL" id="BC058794">
    <property type="protein sequence ID" value="AAH58794.1"/>
    <property type="molecule type" value="mRNA"/>
</dbReference>
<dbReference type="EMBL" id="BC066174">
    <property type="protein sequence ID" value="AAH66174.1"/>
    <property type="molecule type" value="mRNA"/>
</dbReference>
<dbReference type="CCDS" id="CCDS27717.1">
    <molecule id="Q91YN1-1"/>
</dbReference>
<dbReference type="RefSeq" id="NP_001343545.1">
    <molecule id="Q91YN1-1"/>
    <property type="nucleotide sequence ID" value="NM_001356616.1"/>
</dbReference>
<dbReference type="RefSeq" id="NP_598511.1">
    <molecule id="Q91YN1-1"/>
    <property type="nucleotide sequence ID" value="NM_133750.4"/>
</dbReference>
<dbReference type="RefSeq" id="XP_006521546.1">
    <property type="nucleotide sequence ID" value="XM_006521483.2"/>
</dbReference>
<dbReference type="SMR" id="Q91YN1"/>
<dbReference type="FunCoup" id="Q91YN1">
    <property type="interactions" value="27"/>
</dbReference>
<dbReference type="STRING" id="10090.ENSMUSP00000154985"/>
<dbReference type="iPTMnet" id="Q91YN1"/>
<dbReference type="PhosphoSitePlus" id="Q91YN1"/>
<dbReference type="SwissPalm" id="Q91YN1"/>
<dbReference type="jPOST" id="Q91YN1"/>
<dbReference type="PaxDb" id="10090-ENSMUSP00000023069"/>
<dbReference type="PeptideAtlas" id="Q91YN1"/>
<dbReference type="ProteomicsDB" id="275961">
    <molecule id="Q91YN1-1"/>
</dbReference>
<dbReference type="ProteomicsDB" id="275962">
    <molecule id="Q91YN1-2"/>
</dbReference>
<dbReference type="Pumba" id="Q91YN1"/>
<dbReference type="Antibodypedia" id="13685">
    <property type="antibodies" value="49 antibodies from 13 providers"/>
</dbReference>
<dbReference type="DNASU" id="73225"/>
<dbReference type="Ensembl" id="ENSMUST00000023069.9">
    <molecule id="Q91YN1-1"/>
    <property type="protein sequence ID" value="ENSMUSP00000023069.8"/>
    <property type="gene ID" value="ENSMUSG00000022434.9"/>
</dbReference>
<dbReference type="Ensembl" id="ENSMUST00000229203.2">
    <molecule id="Q91YN1-1"/>
    <property type="protein sequence ID" value="ENSMUSP00000154985.2"/>
    <property type="gene ID" value="ENSMUSG00000022434.9"/>
</dbReference>
<dbReference type="GeneID" id="73225"/>
<dbReference type="KEGG" id="mmu:73225"/>
<dbReference type="UCSC" id="uc007xcu.3">
    <molecule id="Q91YN1-2"/>
    <property type="organism name" value="mouse"/>
</dbReference>
<dbReference type="UCSC" id="uc007xcv.2">
    <molecule id="Q91YN1-1"/>
    <property type="organism name" value="mouse"/>
</dbReference>
<dbReference type="AGR" id="MGI:1920475"/>
<dbReference type="CTD" id="55007"/>
<dbReference type="MGI" id="MGI:1920475">
    <property type="gene designation" value="Fam118a"/>
</dbReference>
<dbReference type="VEuPathDB" id="HostDB:ENSMUSG00000022434"/>
<dbReference type="eggNOG" id="ENOG502QSNY">
    <property type="taxonomic scope" value="Eukaryota"/>
</dbReference>
<dbReference type="GeneTree" id="ENSGT00390000010215"/>
<dbReference type="HOGENOM" id="CLU_063072_1_0_1"/>
<dbReference type="InParanoid" id="Q91YN1"/>
<dbReference type="OMA" id="YRDVTQD"/>
<dbReference type="PhylomeDB" id="Q91YN1"/>
<dbReference type="TreeFam" id="TF332439"/>
<dbReference type="BioGRID-ORCS" id="73225">
    <property type="hits" value="1 hit in 76 CRISPR screens"/>
</dbReference>
<dbReference type="ChiTaRS" id="Fam118a">
    <property type="organism name" value="mouse"/>
</dbReference>
<dbReference type="PRO" id="PR:Q91YN1"/>
<dbReference type="Proteomes" id="UP000000589">
    <property type="component" value="Chromosome 15"/>
</dbReference>
<dbReference type="RNAct" id="Q91YN1">
    <property type="molecule type" value="protein"/>
</dbReference>
<dbReference type="Bgee" id="ENSMUSG00000022434">
    <property type="expression patterns" value="Expressed in ureter smooth muscle and 251 other cell types or tissues"/>
</dbReference>
<dbReference type="GO" id="GO:0016020">
    <property type="term" value="C:membrane"/>
    <property type="evidence" value="ECO:0007669"/>
    <property type="project" value="UniProtKB-SubCell"/>
</dbReference>
<dbReference type="GO" id="GO:0042802">
    <property type="term" value="F:identical protein binding"/>
    <property type="evidence" value="ECO:0007669"/>
    <property type="project" value="Ensembl"/>
</dbReference>
<dbReference type="InterPro" id="IPR038916">
    <property type="entry name" value="FAM118"/>
</dbReference>
<dbReference type="PANTHER" id="PTHR28623:SF2">
    <property type="entry name" value="PROTEIN FAM118A"/>
    <property type="match status" value="1"/>
</dbReference>
<dbReference type="PANTHER" id="PTHR28623">
    <property type="entry name" value="PROTEIN FAM118B"/>
    <property type="match status" value="1"/>
</dbReference>
<dbReference type="Pfam" id="PF13289">
    <property type="entry name" value="SIR2_2"/>
    <property type="match status" value="1"/>
</dbReference>
<protein>
    <recommendedName>
        <fullName>Protein FAM118A</fullName>
    </recommendedName>
</protein>
<gene>
    <name type="primary">Fam118a</name>
</gene>
<keyword id="KW-0007">Acetylation</keyword>
<keyword id="KW-0025">Alternative splicing</keyword>
<keyword id="KW-0472">Membrane</keyword>
<keyword id="KW-0597">Phosphoprotein</keyword>
<keyword id="KW-1185">Reference proteome</keyword>
<keyword id="KW-0812">Transmembrane</keyword>
<keyword id="KW-1133">Transmembrane helix</keyword>
<name>F118A_MOUSE</name>
<accession>Q91YN1</accession>
<accession>Q3UP97</accession>
<accession>Q8C4H6</accession>
<accession>Q8C5E1</accession>